<gene>
    <name evidence="2" type="primary">NEC1</name>
    <name type="ordered locus">UL53</name>
</gene>
<comment type="function">
    <text evidence="2">Plays an essential role in virion nuclear egress, the first step of virion release from infected cell. Within the host nucleus, NEC1 interacts with the newly formed capsid through the vertexes and directs it to the inner nuclear membrane by associating with NEC2. Induces the budding of the capsid at the inner nuclear membrane as well as its envelopment into the perinuclear space. There, the NEC1/NEC2 complex promotes the fusion of the enveloped capsid with the outer nuclear membrane and the subsequent release of the viral capsid into the cytoplasm where it will reach the secondary budding sites in the host Golgi or trans-Golgi network.</text>
</comment>
<comment type="subunit">
    <text evidence="2 4">Forms a heterohexameric complex with NEC2. Interacts with capsid vertex specific component 2/CVC2; this interaction directs the capsid to the host inner nuclear membrane to initiate budding.</text>
</comment>
<comment type="subcellular location">
    <subcellularLocation>
        <location evidence="2">Host nucleus inner membrane</location>
    </subcellularLocation>
    <text evidence="2">Remains attached to the nucleus inner membrane through interaction with NEC2.</text>
</comment>
<comment type="PTM">
    <text evidence="1 2">Phosphorylated at serine residues in the N-terminus. This phosphorylation regulates the localization within the inner nuclear membrane (By similarity). Phosphorylation by viral kinase UL97 at Ser-19 plays an important role for correct viral nuclear egress complex (NEC) localization (By similarity).</text>
</comment>
<comment type="similarity">
    <text evidence="2">Belongs to the herpesviridae NEC1 protein family.</text>
</comment>
<feature type="chain" id="PRO_0000416452" description="Nuclear egress protein 1">
    <location>
        <begin position="1"/>
        <end position="376"/>
    </location>
</feature>
<feature type="zinc finger region" description="CCCH-type" evidence="2">
    <location>
        <begin position="106"/>
        <end position="211"/>
    </location>
</feature>
<feature type="region of interest" description="Disordered" evidence="3">
    <location>
        <begin position="22"/>
        <end position="57"/>
    </location>
</feature>
<feature type="region of interest" description="Disordered" evidence="3">
    <location>
        <begin position="316"/>
        <end position="376"/>
    </location>
</feature>
<feature type="compositionally biased region" description="Polar residues" evidence="3">
    <location>
        <begin position="33"/>
        <end position="45"/>
    </location>
</feature>
<feature type="compositionally biased region" description="Polar residues" evidence="3">
    <location>
        <begin position="317"/>
        <end position="332"/>
    </location>
</feature>
<feature type="modified residue" description="Phosphoserine" evidence="1">
    <location>
        <position position="19"/>
    </location>
</feature>
<feature type="helix" evidence="6">
    <location>
        <begin position="61"/>
        <end position="70"/>
    </location>
</feature>
<feature type="helix" evidence="6">
    <location>
        <begin position="72"/>
        <end position="81"/>
    </location>
</feature>
<feature type="strand" evidence="6">
    <location>
        <begin position="89"/>
        <end position="91"/>
    </location>
</feature>
<feature type="strand" evidence="6">
    <location>
        <begin position="94"/>
        <end position="101"/>
    </location>
</feature>
<feature type="strand" evidence="6">
    <location>
        <begin position="105"/>
        <end position="110"/>
    </location>
</feature>
<feature type="strand" evidence="6">
    <location>
        <begin position="113"/>
        <end position="118"/>
    </location>
</feature>
<feature type="helix" evidence="6">
    <location>
        <begin position="119"/>
        <end position="121"/>
    </location>
</feature>
<feature type="strand" evidence="6">
    <location>
        <begin position="123"/>
        <end position="125"/>
    </location>
</feature>
<feature type="helix" evidence="6">
    <location>
        <begin position="134"/>
        <end position="142"/>
    </location>
</feature>
<feature type="helix" evidence="6">
    <location>
        <begin position="144"/>
        <end position="146"/>
    </location>
</feature>
<feature type="turn" evidence="6">
    <location>
        <begin position="148"/>
        <end position="151"/>
    </location>
</feature>
<feature type="helix" evidence="6">
    <location>
        <begin position="152"/>
        <end position="156"/>
    </location>
</feature>
<feature type="turn" evidence="6">
    <location>
        <begin position="157"/>
        <end position="160"/>
    </location>
</feature>
<feature type="helix" evidence="6">
    <location>
        <begin position="162"/>
        <end position="167"/>
    </location>
</feature>
<feature type="helix" evidence="6">
    <location>
        <begin position="172"/>
        <end position="184"/>
    </location>
</feature>
<feature type="strand" evidence="6">
    <location>
        <begin position="188"/>
        <end position="195"/>
    </location>
</feature>
<feature type="strand" evidence="6">
    <location>
        <begin position="198"/>
        <end position="208"/>
    </location>
</feature>
<feature type="strand" evidence="6">
    <location>
        <begin position="210"/>
        <end position="212"/>
    </location>
</feature>
<feature type="helix" evidence="6">
    <location>
        <begin position="214"/>
        <end position="223"/>
    </location>
</feature>
<feature type="turn" evidence="6">
    <location>
        <begin position="224"/>
        <end position="227"/>
    </location>
</feature>
<feature type="strand" evidence="6">
    <location>
        <begin position="228"/>
        <end position="235"/>
    </location>
</feature>
<feature type="strand" evidence="6">
    <location>
        <begin position="238"/>
        <end position="245"/>
    </location>
</feature>
<feature type="helix" evidence="6">
    <location>
        <begin position="257"/>
        <end position="266"/>
    </location>
</feature>
<feature type="helix" evidence="6">
    <location>
        <begin position="271"/>
        <end position="279"/>
    </location>
</feature>
<feature type="helix" evidence="6">
    <location>
        <begin position="281"/>
        <end position="287"/>
    </location>
</feature>
<proteinExistence type="evidence at protein level"/>
<keyword id="KW-0002">3D-structure</keyword>
<keyword id="KW-1043">Host membrane</keyword>
<keyword id="KW-1048">Host nucleus</keyword>
<keyword id="KW-0472">Membrane</keyword>
<keyword id="KW-0479">Metal-binding</keyword>
<keyword id="KW-0597">Phosphoprotein</keyword>
<keyword id="KW-1185">Reference proteome</keyword>
<keyword id="KW-0862">Zinc</keyword>
<keyword id="KW-0863">Zinc-finger</keyword>
<organismHost>
    <name type="scientific">Homo sapiens</name>
    <name type="common">Human</name>
    <dbReference type="NCBI Taxonomy" id="9606"/>
</organismHost>
<dbReference type="EMBL" id="AY446894">
    <property type="protein sequence ID" value="AAR31617.1"/>
    <property type="molecule type" value="Genomic_DNA"/>
</dbReference>
<dbReference type="RefSeq" id="YP_081512.1">
    <property type="nucleotide sequence ID" value="NC_006273.2"/>
</dbReference>
<dbReference type="PDB" id="5D5N">
    <property type="method" value="X-ray"/>
    <property type="resolution" value="2.44 A"/>
    <property type="chains" value="B=50-292"/>
</dbReference>
<dbReference type="PDBsum" id="5D5N"/>
<dbReference type="SMR" id="F5HFZ4"/>
<dbReference type="TCDB" id="9.A.82.1.1">
    <property type="family name" value="the viral nuclear egress complex (v-nec) family"/>
</dbReference>
<dbReference type="iPTMnet" id="F5HFZ4"/>
<dbReference type="DNASU" id="3077575"/>
<dbReference type="GeneID" id="3077575"/>
<dbReference type="KEGG" id="vg:3077575"/>
<dbReference type="Reactome" id="R-HSA-9609690">
    <property type="pathway name" value="HCMV Early Events"/>
</dbReference>
<dbReference type="Reactome" id="R-HSA-9610379">
    <property type="pathway name" value="HCMV Late Events"/>
</dbReference>
<dbReference type="EvolutionaryTrace" id="F5HFZ4"/>
<dbReference type="Proteomes" id="UP000000938">
    <property type="component" value="Segment"/>
</dbReference>
<dbReference type="GO" id="GO:0044201">
    <property type="term" value="C:host cell nuclear inner membrane"/>
    <property type="evidence" value="ECO:0007669"/>
    <property type="project" value="UniProtKB-SubCell"/>
</dbReference>
<dbReference type="GO" id="GO:0016020">
    <property type="term" value="C:membrane"/>
    <property type="evidence" value="ECO:0007669"/>
    <property type="project" value="UniProtKB-KW"/>
</dbReference>
<dbReference type="GO" id="GO:0008270">
    <property type="term" value="F:zinc ion binding"/>
    <property type="evidence" value="ECO:0007669"/>
    <property type="project" value="UniProtKB-KW"/>
</dbReference>
<dbReference type="GO" id="GO:0046765">
    <property type="term" value="P:viral budding from nuclear membrane"/>
    <property type="evidence" value="ECO:0000314"/>
    <property type="project" value="UniProtKB"/>
</dbReference>
<dbReference type="HAMAP" id="MF_04023">
    <property type="entry name" value="HSV_NEC1"/>
    <property type="match status" value="1"/>
</dbReference>
<dbReference type="InterPro" id="IPR021152">
    <property type="entry name" value="Herpes_UL31"/>
</dbReference>
<dbReference type="Pfam" id="PF02718">
    <property type="entry name" value="Herpes_UL31"/>
    <property type="match status" value="1"/>
</dbReference>
<organism>
    <name type="scientific">Human cytomegalovirus (strain Merlin)</name>
    <name type="common">HHV-5</name>
    <name type="synonym">Human herpesvirus 5</name>
    <dbReference type="NCBI Taxonomy" id="295027"/>
    <lineage>
        <taxon>Viruses</taxon>
        <taxon>Duplodnaviria</taxon>
        <taxon>Heunggongvirae</taxon>
        <taxon>Peploviricota</taxon>
        <taxon>Herviviricetes</taxon>
        <taxon>Herpesvirales</taxon>
        <taxon>Orthoherpesviridae</taxon>
        <taxon>Betaherpesvirinae</taxon>
        <taxon>Cytomegalovirus</taxon>
        <taxon>Cytomegalovirus humanbeta5</taxon>
        <taxon>Human cytomegalovirus</taxon>
    </lineage>
</organism>
<accession>F5HFZ4</accession>
<name>NEC1_HCMVM</name>
<reference key="1">
    <citation type="journal article" date="2004" name="J. Gen. Virol.">
        <title>Genetic content of wild-type human cytomegalovirus.</title>
        <authorList>
            <person name="Dolan A."/>
            <person name="Cunningham C."/>
            <person name="Hector R.D."/>
            <person name="Hassan-Walker A.F."/>
            <person name="Lee L."/>
            <person name="Addison C."/>
            <person name="Dargan D.J."/>
            <person name="McGeoch D.J."/>
            <person name="Gatherer D."/>
            <person name="Emery V.C."/>
            <person name="Griffiths P.D."/>
            <person name="Sinzger C."/>
            <person name="McSharry B.P."/>
            <person name="Wilkinson G.W.G."/>
            <person name="Davison A.J."/>
        </authorList>
    </citation>
    <scope>NUCLEOTIDE SEQUENCE [LARGE SCALE GENOMIC DNA]</scope>
    <source>
        <strain>Merlin</strain>
    </source>
</reference>
<reference evidence="5" key="2">
    <citation type="journal article" date="2015" name="J. Biol. Chem.">
        <title>Crystal Structure of the Human Cytomegalovirus pUL50-pUL53 Core Nuclear Egress Complex Provides Insight into a Unique Assembly Scaffold for Virus-Host Protein Interactions.</title>
        <authorList>
            <person name="Walzer S.A."/>
            <person name="Egerer-Sieber C."/>
            <person name="Sticht H."/>
            <person name="Sevvana M."/>
            <person name="Hohl K."/>
            <person name="Milbradt J."/>
            <person name="Muller Y.A."/>
            <person name="Marschall M."/>
        </authorList>
    </citation>
    <scope>X-RAY CRYSTALLOGRAPHY (2.44 ANGSTROMS) OF 1-175</scope>
    <scope>INTERACTION WITH NEC2</scope>
</reference>
<sequence length="376" mass="42302">MSSVSGVRTPRERRSALRSLLRKRRQRELASKVASTVNGATSANNHGEPPSPADARPRLTLHDLHDIFREHPELELKYLNMMKMAITGKESICLPFNFHSHRQHTCLDISPYGNEQVSRIACTSCEDNRILPTASDAMVAFINQTSNIMKNRNFYYGFCKSSELLKLSTNQPPIFQIYYLLHAANHDIVPFMHAENGRLHMHVIFENSDVHIPCDCITQMLTAAREDYSVTLNIVRDHVVISVLCHAVSASSVKIDVTILQRKIDEMDIPNDVSESFERYKELIQELCQSSGNNLYEEATSSYAIRSPLTASPLHVVSTNGCGPSSSSQSTPPHLHPPSQATQPHHYSHHQSQSQQHHHRPQSPPPPLFLNSIRAP</sequence>
<evidence type="ECO:0000250" key="1">
    <source>
        <dbReference type="UniProtKB" id="P16794"/>
    </source>
</evidence>
<evidence type="ECO:0000255" key="2">
    <source>
        <dbReference type="HAMAP-Rule" id="MF_04023"/>
    </source>
</evidence>
<evidence type="ECO:0000256" key="3">
    <source>
        <dbReference type="SAM" id="MobiDB-lite"/>
    </source>
</evidence>
<evidence type="ECO:0000269" key="4">
    <source>
    </source>
</evidence>
<evidence type="ECO:0007744" key="5">
    <source>
        <dbReference type="PDB" id="5D5N"/>
    </source>
</evidence>
<evidence type="ECO:0007829" key="6">
    <source>
        <dbReference type="PDB" id="5D5N"/>
    </source>
</evidence>
<protein>
    <recommendedName>
        <fullName evidence="2">Nuclear egress protein 1</fullName>
    </recommendedName>
</protein>